<sequence length="145" mass="15350">MKGLLQRVRNARVEVGGEVVGAIDQGILVLVGIEPQDTRASADKLLHKLLNYRVFSDADGKMNLSLREVGGGLLLVSQFTLAADTKSGLRAGFSKAAAPALGAELFDYLLSQARIAHTAVAAGQFGADMQVHLINDGPVTFLFDT</sequence>
<comment type="function">
    <text evidence="1">An aminoacyl-tRNA editing enzyme that deacylates mischarged D-aminoacyl-tRNAs. Also deacylates mischarged glycyl-tRNA(Ala), protecting cells against glycine mischarging by AlaRS. Acts via tRNA-based rather than protein-based catalysis; rejects L-amino acids rather than detecting D-amino acids in the active site. By recycling D-aminoacyl-tRNA to D-amino acids and free tRNA molecules, this enzyme counteracts the toxicity associated with the formation of D-aminoacyl-tRNA entities in vivo and helps enforce protein L-homochirality.</text>
</comment>
<comment type="catalytic activity">
    <reaction evidence="1">
        <text>glycyl-tRNA(Ala) + H2O = tRNA(Ala) + glycine + H(+)</text>
        <dbReference type="Rhea" id="RHEA:53744"/>
        <dbReference type="Rhea" id="RHEA-COMP:9657"/>
        <dbReference type="Rhea" id="RHEA-COMP:13640"/>
        <dbReference type="ChEBI" id="CHEBI:15377"/>
        <dbReference type="ChEBI" id="CHEBI:15378"/>
        <dbReference type="ChEBI" id="CHEBI:57305"/>
        <dbReference type="ChEBI" id="CHEBI:78442"/>
        <dbReference type="ChEBI" id="CHEBI:78522"/>
        <dbReference type="EC" id="3.1.1.96"/>
    </reaction>
</comment>
<comment type="catalytic activity">
    <reaction evidence="1">
        <text>a D-aminoacyl-tRNA + H2O = a tRNA + a D-alpha-amino acid + H(+)</text>
        <dbReference type="Rhea" id="RHEA:13953"/>
        <dbReference type="Rhea" id="RHEA-COMP:10123"/>
        <dbReference type="Rhea" id="RHEA-COMP:10124"/>
        <dbReference type="ChEBI" id="CHEBI:15377"/>
        <dbReference type="ChEBI" id="CHEBI:15378"/>
        <dbReference type="ChEBI" id="CHEBI:59871"/>
        <dbReference type="ChEBI" id="CHEBI:78442"/>
        <dbReference type="ChEBI" id="CHEBI:79333"/>
        <dbReference type="EC" id="3.1.1.96"/>
    </reaction>
</comment>
<comment type="subunit">
    <text evidence="1">Homodimer.</text>
</comment>
<comment type="subcellular location">
    <subcellularLocation>
        <location evidence="1">Cytoplasm</location>
    </subcellularLocation>
</comment>
<comment type="domain">
    <text evidence="1">A Gly-cisPro motif from one monomer fits into the active site of the other monomer to allow specific chiral rejection of L-amino acids.</text>
</comment>
<comment type="similarity">
    <text evidence="1">Belongs to the DTD family.</text>
</comment>
<reference key="1">
    <citation type="journal article" date="2005" name="J. Bacteriol.">
        <title>Whole-genome sequence analysis of Pseudomonas syringae pv. phaseolicola 1448A reveals divergence among pathovars in genes involved in virulence and transposition.</title>
        <authorList>
            <person name="Joardar V."/>
            <person name="Lindeberg M."/>
            <person name="Jackson R.W."/>
            <person name="Selengut J."/>
            <person name="Dodson R."/>
            <person name="Brinkac L.M."/>
            <person name="Daugherty S.C."/>
            <person name="DeBoy R.T."/>
            <person name="Durkin A.S."/>
            <person name="Gwinn Giglio M."/>
            <person name="Madupu R."/>
            <person name="Nelson W.C."/>
            <person name="Rosovitz M.J."/>
            <person name="Sullivan S.A."/>
            <person name="Crabtree J."/>
            <person name="Creasy T."/>
            <person name="Davidsen T.M."/>
            <person name="Haft D.H."/>
            <person name="Zafar N."/>
            <person name="Zhou L."/>
            <person name="Halpin R."/>
            <person name="Holley T."/>
            <person name="Khouri H.M."/>
            <person name="Feldblyum T.V."/>
            <person name="White O."/>
            <person name="Fraser C.M."/>
            <person name="Chatterjee A.K."/>
            <person name="Cartinhour S."/>
            <person name="Schneider D."/>
            <person name="Mansfield J.W."/>
            <person name="Collmer A."/>
            <person name="Buell R."/>
        </authorList>
    </citation>
    <scope>NUCLEOTIDE SEQUENCE [LARGE SCALE GENOMIC DNA]</scope>
    <source>
        <strain>1448A / Race 6</strain>
    </source>
</reference>
<evidence type="ECO:0000255" key="1">
    <source>
        <dbReference type="HAMAP-Rule" id="MF_00518"/>
    </source>
</evidence>
<proteinExistence type="inferred from homology"/>
<protein>
    <recommendedName>
        <fullName evidence="1">D-aminoacyl-tRNA deacylase</fullName>
        <shortName evidence="1">DTD</shortName>
        <ecNumber evidence="1">3.1.1.96</ecNumber>
    </recommendedName>
    <alternativeName>
        <fullName evidence="1">Gly-tRNA(Ala) deacylase</fullName>
    </alternativeName>
</protein>
<name>DTD_PSE14</name>
<accession>Q48PK8</accession>
<keyword id="KW-0963">Cytoplasm</keyword>
<keyword id="KW-0378">Hydrolase</keyword>
<keyword id="KW-0694">RNA-binding</keyword>
<keyword id="KW-0820">tRNA-binding</keyword>
<gene>
    <name evidence="1" type="primary">dtd</name>
    <name type="ordered locus">PSPPH_0358</name>
</gene>
<organism>
    <name type="scientific">Pseudomonas savastanoi pv. phaseolicola (strain 1448A / Race 6)</name>
    <name type="common">Pseudomonas syringae pv. phaseolicola (strain 1448A / Race 6)</name>
    <dbReference type="NCBI Taxonomy" id="264730"/>
    <lineage>
        <taxon>Bacteria</taxon>
        <taxon>Pseudomonadati</taxon>
        <taxon>Pseudomonadota</taxon>
        <taxon>Gammaproteobacteria</taxon>
        <taxon>Pseudomonadales</taxon>
        <taxon>Pseudomonadaceae</taxon>
        <taxon>Pseudomonas</taxon>
    </lineage>
</organism>
<dbReference type="EC" id="3.1.1.96" evidence="1"/>
<dbReference type="EMBL" id="CP000058">
    <property type="protein sequence ID" value="AAZ36048.1"/>
    <property type="molecule type" value="Genomic_DNA"/>
</dbReference>
<dbReference type="RefSeq" id="WP_004654194.1">
    <property type="nucleotide sequence ID" value="NC_005773.3"/>
</dbReference>
<dbReference type="SMR" id="Q48PK8"/>
<dbReference type="GeneID" id="61867708"/>
<dbReference type="KEGG" id="psp:PSPPH_0358"/>
<dbReference type="eggNOG" id="COG1490">
    <property type="taxonomic scope" value="Bacteria"/>
</dbReference>
<dbReference type="HOGENOM" id="CLU_076901_1_1_6"/>
<dbReference type="Proteomes" id="UP000000551">
    <property type="component" value="Chromosome"/>
</dbReference>
<dbReference type="GO" id="GO:0005737">
    <property type="term" value="C:cytoplasm"/>
    <property type="evidence" value="ECO:0007669"/>
    <property type="project" value="UniProtKB-SubCell"/>
</dbReference>
<dbReference type="GO" id="GO:0051500">
    <property type="term" value="F:D-tyrosyl-tRNA(Tyr) deacylase activity"/>
    <property type="evidence" value="ECO:0007669"/>
    <property type="project" value="TreeGrafter"/>
</dbReference>
<dbReference type="GO" id="GO:0106026">
    <property type="term" value="F:Gly-tRNA(Ala) deacylase activity"/>
    <property type="evidence" value="ECO:0007669"/>
    <property type="project" value="UniProtKB-UniRule"/>
</dbReference>
<dbReference type="GO" id="GO:0043908">
    <property type="term" value="F:Ser(Gly)-tRNA(Ala) hydrolase activity"/>
    <property type="evidence" value="ECO:0007669"/>
    <property type="project" value="UniProtKB-UniRule"/>
</dbReference>
<dbReference type="GO" id="GO:0000049">
    <property type="term" value="F:tRNA binding"/>
    <property type="evidence" value="ECO:0007669"/>
    <property type="project" value="UniProtKB-UniRule"/>
</dbReference>
<dbReference type="GO" id="GO:0019478">
    <property type="term" value="P:D-amino acid catabolic process"/>
    <property type="evidence" value="ECO:0007669"/>
    <property type="project" value="UniProtKB-UniRule"/>
</dbReference>
<dbReference type="FunFam" id="3.50.80.10:FF:000001">
    <property type="entry name" value="D-aminoacyl-tRNA deacylase"/>
    <property type="match status" value="1"/>
</dbReference>
<dbReference type="Gene3D" id="3.50.80.10">
    <property type="entry name" value="D-tyrosyl-tRNA(Tyr) deacylase"/>
    <property type="match status" value="1"/>
</dbReference>
<dbReference type="HAMAP" id="MF_00518">
    <property type="entry name" value="Deacylase_Dtd"/>
    <property type="match status" value="1"/>
</dbReference>
<dbReference type="InterPro" id="IPR003732">
    <property type="entry name" value="Daa-tRNA_deacyls_DTD"/>
</dbReference>
<dbReference type="InterPro" id="IPR023509">
    <property type="entry name" value="DTD-like_sf"/>
</dbReference>
<dbReference type="NCBIfam" id="TIGR00256">
    <property type="entry name" value="D-aminoacyl-tRNA deacylase"/>
    <property type="match status" value="1"/>
</dbReference>
<dbReference type="PANTHER" id="PTHR10472:SF5">
    <property type="entry name" value="D-AMINOACYL-TRNA DEACYLASE 1"/>
    <property type="match status" value="1"/>
</dbReference>
<dbReference type="PANTHER" id="PTHR10472">
    <property type="entry name" value="D-TYROSYL-TRNA TYR DEACYLASE"/>
    <property type="match status" value="1"/>
</dbReference>
<dbReference type="Pfam" id="PF02580">
    <property type="entry name" value="Tyr_Deacylase"/>
    <property type="match status" value="1"/>
</dbReference>
<dbReference type="SUPFAM" id="SSF69500">
    <property type="entry name" value="DTD-like"/>
    <property type="match status" value="1"/>
</dbReference>
<feature type="chain" id="PRO_0000259299" description="D-aminoacyl-tRNA deacylase">
    <location>
        <begin position="1"/>
        <end position="145"/>
    </location>
</feature>
<feature type="short sequence motif" description="Gly-cisPro motif, important for rejection of L-amino acids" evidence="1">
    <location>
        <begin position="137"/>
        <end position="138"/>
    </location>
</feature>